<organism>
    <name type="scientific">Mus caroli</name>
    <name type="common">Ryukyu mouse</name>
    <name type="synonym">Ricefield mouse</name>
    <dbReference type="NCBI Taxonomy" id="10089"/>
    <lineage>
        <taxon>Eukaryota</taxon>
        <taxon>Metazoa</taxon>
        <taxon>Chordata</taxon>
        <taxon>Craniata</taxon>
        <taxon>Vertebrata</taxon>
        <taxon>Euteleostomi</taxon>
        <taxon>Mammalia</taxon>
        <taxon>Eutheria</taxon>
        <taxon>Euarchontoglires</taxon>
        <taxon>Glires</taxon>
        <taxon>Rodentia</taxon>
        <taxon>Myomorpha</taxon>
        <taxon>Muroidea</taxon>
        <taxon>Muridae</taxon>
        <taxon>Murinae</taxon>
        <taxon>Mus</taxon>
        <taxon>Mus</taxon>
    </lineage>
</organism>
<proteinExistence type="inferred from homology"/>
<name>TRI18_MUSCR</name>
<keyword id="KW-0963">Cytoplasm</keyword>
<keyword id="KW-0206">Cytoskeleton</keyword>
<keyword id="KW-0479">Metal-binding</keyword>
<keyword id="KW-0493">Microtubule</keyword>
<keyword id="KW-0808">Transferase</keyword>
<keyword id="KW-0833">Ubl conjugation pathway</keyword>
<feature type="chain" id="PRO_0000056229" description="E3 ubiquitin-protein ligase Midline-1">
    <location>
        <begin position="1" status="less than"/>
        <end position="108"/>
    </location>
</feature>
<feature type="domain" description="B30.2/SPRY" evidence="2">
    <location>
        <begin position="1" status="less than"/>
        <end position="100"/>
    </location>
</feature>
<feature type="non-terminal residue">
    <location>
        <position position="1"/>
    </location>
</feature>
<sequence length="108" mass="12195">KSAPKHEWIGKNSASWALCRCNNNWVVRHNSKEIPIEPAPHLRRVGILLDYDNGSIAFYDALNSIHLYTFDVALAQPVCPTFTVWNKCLTIITGLPIPDHLDCTEQLP</sequence>
<evidence type="ECO:0000250" key="1">
    <source>
        <dbReference type="UniProtKB" id="O15344"/>
    </source>
</evidence>
<evidence type="ECO:0000255" key="2">
    <source>
        <dbReference type="PROSITE-ProRule" id="PRU00548"/>
    </source>
</evidence>
<evidence type="ECO:0000305" key="3"/>
<comment type="function">
    <text evidence="1">Has E3 ubiquitin ligase activity towards IGBP1, promoting its monoubiquitination, which results in deprotection of the catalytic subunit of protein phosphatase PP2A, and its subsequent degradation by polyubiquitination.</text>
</comment>
<comment type="catalytic activity">
    <reaction>
        <text>S-ubiquitinyl-[E2 ubiquitin-conjugating enzyme]-L-cysteine + [acceptor protein]-L-lysine = [E2 ubiquitin-conjugating enzyme]-L-cysteine + N(6)-ubiquitinyl-[acceptor protein]-L-lysine.</text>
        <dbReference type="EC" id="2.3.2.27"/>
    </reaction>
</comment>
<comment type="subunit">
    <text evidence="1">Homodimer or heterodimer with MID2. Interacts with IGBP1.</text>
</comment>
<comment type="subcellular location">
    <subcellularLocation>
        <location evidence="1">Cytoplasm</location>
    </subcellularLocation>
    <subcellularLocation>
        <location evidence="1">Cytoplasm</location>
        <location evidence="1">Cytoskeleton</location>
    </subcellularLocation>
    <text evidence="1">Microtubule-associated.</text>
</comment>
<comment type="similarity">
    <text evidence="3">Belongs to the TRIM/RBCC family.</text>
</comment>
<gene>
    <name type="primary">Mid1</name>
    <name type="synonym">Fxy</name>
    <name type="synonym">Trim18</name>
</gene>
<accession>P82456</accession>
<protein>
    <recommendedName>
        <fullName>E3 ubiquitin-protein ligase Midline-1</fullName>
        <ecNumber>2.3.2.27</ecNumber>
    </recommendedName>
    <alternativeName>
        <fullName>RING finger protein Midline-1</fullName>
    </alternativeName>
    <alternativeName>
        <fullName evidence="3">RING-type E3 ubiquitin transferase Midline-1</fullName>
    </alternativeName>
    <alternativeName>
        <fullName>Tripartite motif-containing protein 18</fullName>
    </alternativeName>
</protein>
<dbReference type="EC" id="2.3.2.27"/>
<dbReference type="EMBL" id="AF186462">
    <property type="protein sequence ID" value="AAF01246.1"/>
    <property type="molecule type" value="Genomic_DNA"/>
</dbReference>
<dbReference type="SMR" id="P82456"/>
<dbReference type="MGI" id="MGI:1100537">
    <property type="gene designation" value="Mid1"/>
</dbReference>
<dbReference type="Proteomes" id="UP000515126">
    <property type="component" value="Unplaced"/>
</dbReference>
<dbReference type="GO" id="GO:0005737">
    <property type="term" value="C:cytoplasm"/>
    <property type="evidence" value="ECO:0007669"/>
    <property type="project" value="UniProtKB-SubCell"/>
</dbReference>
<dbReference type="GO" id="GO:0005874">
    <property type="term" value="C:microtubule"/>
    <property type="evidence" value="ECO:0007669"/>
    <property type="project" value="UniProtKB-KW"/>
</dbReference>
<dbReference type="GO" id="GO:0046872">
    <property type="term" value="F:metal ion binding"/>
    <property type="evidence" value="ECO:0007669"/>
    <property type="project" value="UniProtKB-KW"/>
</dbReference>
<dbReference type="GO" id="GO:0016740">
    <property type="term" value="F:transferase activity"/>
    <property type="evidence" value="ECO:0007669"/>
    <property type="project" value="UniProtKB-KW"/>
</dbReference>
<dbReference type="GO" id="GO:0070507">
    <property type="term" value="P:regulation of microtubule cytoskeleton organization"/>
    <property type="evidence" value="ECO:0007669"/>
    <property type="project" value="TreeGrafter"/>
</dbReference>
<dbReference type="FunFam" id="2.60.120.920:FF:000136">
    <property type="entry name" value="E3 ubiquitin-protein ligase Midline-1"/>
    <property type="match status" value="1"/>
</dbReference>
<dbReference type="Gene3D" id="2.60.120.920">
    <property type="match status" value="1"/>
</dbReference>
<dbReference type="InterPro" id="IPR001870">
    <property type="entry name" value="B30.2/SPRY"/>
</dbReference>
<dbReference type="InterPro" id="IPR043136">
    <property type="entry name" value="B30.2/SPRY_sf"/>
</dbReference>
<dbReference type="InterPro" id="IPR003879">
    <property type="entry name" value="Butyrophylin_SPRY"/>
</dbReference>
<dbReference type="InterPro" id="IPR013320">
    <property type="entry name" value="ConA-like_dom_sf"/>
</dbReference>
<dbReference type="InterPro" id="IPR050617">
    <property type="entry name" value="E3_ligase_FN3/SPRY"/>
</dbReference>
<dbReference type="InterPro" id="IPR003877">
    <property type="entry name" value="SPRY_dom"/>
</dbReference>
<dbReference type="PANTHER" id="PTHR24099:SF23">
    <property type="entry name" value="E3 UBIQUITIN-PROTEIN LIGASE MIDLINE-1"/>
    <property type="match status" value="1"/>
</dbReference>
<dbReference type="PANTHER" id="PTHR24099">
    <property type="entry name" value="E3 UBIQUITIN-PROTEIN LIGASE TRIM36-RELATED"/>
    <property type="match status" value="1"/>
</dbReference>
<dbReference type="Pfam" id="PF00622">
    <property type="entry name" value="SPRY"/>
    <property type="match status" value="1"/>
</dbReference>
<dbReference type="PRINTS" id="PR01407">
    <property type="entry name" value="BUTYPHLNCDUF"/>
</dbReference>
<dbReference type="SMART" id="SM00449">
    <property type="entry name" value="SPRY"/>
    <property type="match status" value="1"/>
</dbReference>
<dbReference type="SUPFAM" id="SSF49899">
    <property type="entry name" value="Concanavalin A-like lectins/glucanases"/>
    <property type="match status" value="1"/>
</dbReference>
<dbReference type="PROSITE" id="PS50188">
    <property type="entry name" value="B302_SPRY"/>
    <property type="match status" value="1"/>
</dbReference>
<reference key="1">
    <citation type="journal article" date="1999" name="Curr. Biol.">
        <title>Evolutionary rate of a gene affected by chromosomal position.</title>
        <authorList>
            <person name="Perry J."/>
            <person name="Ashworth A."/>
        </authorList>
    </citation>
    <scope>NUCLEOTIDE SEQUENCE [GENOMIC DNA]</scope>
</reference>